<feature type="transit peptide" description="Mitochondrion" evidence="2">
    <location>
        <begin position="1"/>
        <end position="37"/>
    </location>
</feature>
<feature type="chain" id="PRO_0000340084" description="Mitochondrial intermediate peptidase">
    <location>
        <begin position="38"/>
        <end position="772"/>
    </location>
</feature>
<feature type="active site" evidence="3">
    <location>
        <position position="559"/>
    </location>
</feature>
<feature type="binding site" evidence="3">
    <location>
        <position position="558"/>
    </location>
    <ligand>
        <name>Zn(2+)</name>
        <dbReference type="ChEBI" id="CHEBI:29105"/>
        <note>catalytic</note>
    </ligand>
</feature>
<feature type="binding site" evidence="3">
    <location>
        <position position="562"/>
    </location>
    <ligand>
        <name>Zn(2+)</name>
        <dbReference type="ChEBI" id="CHEBI:29105"/>
        <note>catalytic</note>
    </ligand>
</feature>
<feature type="binding site" evidence="3">
    <location>
        <position position="565"/>
    </location>
    <ligand>
        <name>Zn(2+)</name>
        <dbReference type="ChEBI" id="CHEBI:29105"/>
        <note>catalytic</note>
    </ligand>
</feature>
<gene>
    <name type="primary">OCT1</name>
    <name type="ORF">SCY_3247</name>
</gene>
<organism>
    <name type="scientific">Saccharomyces cerevisiae (strain YJM789)</name>
    <name type="common">Baker's yeast</name>
    <dbReference type="NCBI Taxonomy" id="307796"/>
    <lineage>
        <taxon>Eukaryota</taxon>
        <taxon>Fungi</taxon>
        <taxon>Dikarya</taxon>
        <taxon>Ascomycota</taxon>
        <taxon>Saccharomycotina</taxon>
        <taxon>Saccharomycetes</taxon>
        <taxon>Saccharomycetales</taxon>
        <taxon>Saccharomycetaceae</taxon>
        <taxon>Saccharomyces</taxon>
    </lineage>
</organism>
<reference key="1">
    <citation type="journal article" date="2007" name="Proc. Natl. Acad. Sci. U.S.A.">
        <title>Genome sequencing and comparative analysis of Saccharomyces cerevisiae strain YJM789.</title>
        <authorList>
            <person name="Wei W."/>
            <person name="McCusker J.H."/>
            <person name="Hyman R.W."/>
            <person name="Jones T."/>
            <person name="Ning Y."/>
            <person name="Cao Z."/>
            <person name="Gu Z."/>
            <person name="Bruno D."/>
            <person name="Miranda M."/>
            <person name="Nguyen M."/>
            <person name="Wilhelmy J."/>
            <person name="Komp C."/>
            <person name="Tamse R."/>
            <person name="Wang X."/>
            <person name="Jia P."/>
            <person name="Luedi P."/>
            <person name="Oefner P.J."/>
            <person name="David L."/>
            <person name="Dietrich F.S."/>
            <person name="Li Y."/>
            <person name="Davis R.W."/>
            <person name="Steinmetz L.M."/>
        </authorList>
    </citation>
    <scope>NUCLEOTIDE SEQUENCE [LARGE SCALE GENOMIC DNA]</scope>
    <source>
        <strain>YJM789</strain>
    </source>
</reference>
<protein>
    <recommendedName>
        <fullName>Mitochondrial intermediate peptidase</fullName>
        <shortName>MIP</shortName>
        <ecNumber>3.4.24.59</ecNumber>
    </recommendedName>
    <alternativeName>
        <fullName>Octapeptidyl aminopeptidase</fullName>
    </alternativeName>
</protein>
<accession>A6ZZI7</accession>
<evidence type="ECO:0000250" key="1"/>
<evidence type="ECO:0000255" key="2"/>
<evidence type="ECO:0000255" key="3">
    <source>
        <dbReference type="PROSITE-ProRule" id="PRU10095"/>
    </source>
</evidence>
<evidence type="ECO:0000305" key="4"/>
<dbReference type="EC" id="3.4.24.59"/>
<dbReference type="EMBL" id="AAFW02000151">
    <property type="protein sequence ID" value="EDN60035.1"/>
    <property type="molecule type" value="Genomic_DNA"/>
</dbReference>
<dbReference type="SMR" id="A6ZZI7"/>
<dbReference type="MEROPS" id="M03.006"/>
<dbReference type="HOGENOM" id="CLU_001805_0_0_1"/>
<dbReference type="OrthoDB" id="2287at4893"/>
<dbReference type="Proteomes" id="UP000007060">
    <property type="component" value="Unassembled WGS sequence"/>
</dbReference>
<dbReference type="GO" id="GO:0005759">
    <property type="term" value="C:mitochondrial matrix"/>
    <property type="evidence" value="ECO:0007669"/>
    <property type="project" value="UniProtKB-SubCell"/>
</dbReference>
<dbReference type="GO" id="GO:0046872">
    <property type="term" value="F:metal ion binding"/>
    <property type="evidence" value="ECO:0007669"/>
    <property type="project" value="UniProtKB-KW"/>
</dbReference>
<dbReference type="GO" id="GO:0004222">
    <property type="term" value="F:metalloendopeptidase activity"/>
    <property type="evidence" value="ECO:0007669"/>
    <property type="project" value="UniProtKB-EC"/>
</dbReference>
<dbReference type="GO" id="GO:0006518">
    <property type="term" value="P:peptide metabolic process"/>
    <property type="evidence" value="ECO:0007669"/>
    <property type="project" value="TreeGrafter"/>
</dbReference>
<dbReference type="GO" id="GO:0006627">
    <property type="term" value="P:protein processing involved in protein targeting to mitochondrion"/>
    <property type="evidence" value="ECO:0007669"/>
    <property type="project" value="TreeGrafter"/>
</dbReference>
<dbReference type="CDD" id="cd06457">
    <property type="entry name" value="M3A_MIP"/>
    <property type="match status" value="1"/>
</dbReference>
<dbReference type="FunFam" id="3.40.390.10:FF:000029">
    <property type="entry name" value="Mitochondrial intermediate peptidase 1"/>
    <property type="match status" value="1"/>
</dbReference>
<dbReference type="Gene3D" id="3.40.390.10">
    <property type="entry name" value="Collagenase (Catalytic Domain)"/>
    <property type="match status" value="1"/>
</dbReference>
<dbReference type="Gene3D" id="1.10.1370.10">
    <property type="entry name" value="Neurolysin, domain 3"/>
    <property type="match status" value="1"/>
</dbReference>
<dbReference type="InterPro" id="IPR033851">
    <property type="entry name" value="M3A_MIP"/>
</dbReference>
<dbReference type="InterPro" id="IPR024079">
    <property type="entry name" value="MetalloPept_cat_dom_sf"/>
</dbReference>
<dbReference type="InterPro" id="IPR024077">
    <property type="entry name" value="Neurolysin/TOP_dom2"/>
</dbReference>
<dbReference type="InterPro" id="IPR045090">
    <property type="entry name" value="Pept_M3A_M3B"/>
</dbReference>
<dbReference type="InterPro" id="IPR001567">
    <property type="entry name" value="Pept_M3A_M3B_dom"/>
</dbReference>
<dbReference type="PANTHER" id="PTHR11804:SF79">
    <property type="entry name" value="MITOCHONDRIAL INTERMEDIATE PEPTIDASE"/>
    <property type="match status" value="1"/>
</dbReference>
<dbReference type="PANTHER" id="PTHR11804">
    <property type="entry name" value="PROTEASE M3 THIMET OLIGOPEPTIDASE-RELATED"/>
    <property type="match status" value="1"/>
</dbReference>
<dbReference type="Pfam" id="PF01432">
    <property type="entry name" value="Peptidase_M3"/>
    <property type="match status" value="1"/>
</dbReference>
<dbReference type="SUPFAM" id="SSF55486">
    <property type="entry name" value="Metalloproteases ('zincins'), catalytic domain"/>
    <property type="match status" value="1"/>
</dbReference>
<dbReference type="PROSITE" id="PS00142">
    <property type="entry name" value="ZINC_PROTEASE"/>
    <property type="match status" value="1"/>
</dbReference>
<comment type="function">
    <text>Cleaves proteins, imported into the mitochondrion, to their mature size. While most mitochondrial precursor proteins are processed to the mature form in one step by mitochondrial processing peptidase (MPP), the sequential cleavage by MIP of an octapeptide after initial processing by MPP is a required step for a subgroup of nuclear-encoded precursor proteins destined for the matrix or the inner membrane. Cleaves precursor proteins of respiratory components, including subunits of the electron transport chain and tricarboxylic acid cycle enzymes, and components of the mitochondrial genetic machinery, including ribosomal proteins, translation factors, and proteins required for mitochondrial DNA metabolism.</text>
</comment>
<comment type="catalytic activity">
    <reaction>
        <text>Release of an N-terminal octapeptide as second stage of processing of some proteins imported into the mitochondrion.</text>
        <dbReference type="EC" id="3.4.24.59"/>
    </reaction>
</comment>
<comment type="cofactor">
    <cofactor evidence="1">
        <name>Zn(2+)</name>
        <dbReference type="ChEBI" id="CHEBI:29105"/>
    </cofactor>
    <text evidence="1">Binds 1 zinc ion.</text>
</comment>
<comment type="activity regulation">
    <text evidence="1">Stimulated by Fe(2+).</text>
</comment>
<comment type="subcellular location">
    <subcellularLocation>
        <location>Mitochondrion matrix</location>
    </subcellularLocation>
</comment>
<comment type="miscellaneous">
    <text>Present with 2690 molecules/cell in log phase SD medium.</text>
</comment>
<comment type="similarity">
    <text evidence="4">Belongs to the peptidase M3 family.</text>
</comment>
<sequence length="772" mass="88190">MLRTIILKAGSNASIPSLSRQNKLLRFFATAGAVSRTSPGSIKKIFDDNSYWRNINGQDANNSKISQYLFKKNKTGLFKNPYLTSPDGLRKFSQVSLQQAQELLDKMRNDFSESGKLTYIMNLDRLSDTLCRVIDLCEFIRSTHPDDAFVRAAQDCHEQMFEFMNVLNTDVSLCNMLKSVLNNPEVSSKLSAEELKVGKILLDDFEKSGIYMNPDVREKFIQLSQEISLVGQEFINHTDYPGSNSVKIPCKDLDNSKVSTFLLKQLNKDVKGQNYKVPTFGYAAYALLKSCENEMVRKKLWTALHSCSDKQVKRLSHLIKLRAILANLMHKTSYAEYQLEGKMAKNPKDVQDFILTLMNNTIEKTANELKFIAELKAKDLKKPLTTNTDEILKLVRPWDRDYYTGKYFQLNPSNSPSAKEISYYFTLGNVIQGLSDLFQQIYGIRLEPAITDEGETWSPDVRRLNVISEEEGIIGIIYCDLFERNGKTSNPAHFTVCCSRQIYPSETDFSTIQVGENPDGTYFQLPVISLVCNFSPILIASKKSLCFLQLSEVETLFHEMGHAMHSMLGRTHMQNISGTRCATDFVELPSILMEHFAKDIRILTKIGKHYGTGETIQADMLQRFMKSTNFLQNCETYSQAKMAMLDQSFHDEKIISDIDNFDVVENYQALERRLKVLVDDQSNWCGRFGHLFGYGATYYSYLFDRTIASKIWYALFEDDPYSRKNGDKFKKHLLKWGGLKDPWKCIADVLECPMLEKGGSDAMEFIAQSHKS</sequence>
<keyword id="KW-0378">Hydrolase</keyword>
<keyword id="KW-0479">Metal-binding</keyword>
<keyword id="KW-0482">Metalloprotease</keyword>
<keyword id="KW-0496">Mitochondrion</keyword>
<keyword id="KW-0645">Protease</keyword>
<keyword id="KW-0809">Transit peptide</keyword>
<keyword id="KW-0862">Zinc</keyword>
<proteinExistence type="inferred from homology"/>
<name>PMIP_YEAS7</name>